<comment type="function">
    <text>Involved in cell growth regulation. May be involved in the regulation of mitogenic signals and control of cell proliferation. Involved in the internalization of ligand-inducible receptors of the receptor tyrosine kinase (RTK) type, in particular EGFR. Plays a role in the assembly of clathrin-coated pits (CCPs). Acts as a clathrin adapter required for post-Golgi trafficking. Seems to be involved in CCPs maturation including invagination or budding. Involved in endocytosis of integrin beta-1 (ITGB1) and transferrin receptor (TFR); internalization of ITGB1 as DAB2-dependent cargo but not TFR seems to require association with DAB2.</text>
</comment>
<comment type="subunit">
    <text evidence="2 7 9 10 11 12 13 14">Interacts with HGS; the interaction bridges the interaction of STAM or STAM2 with EPS15. Isoform 2 interacts with HGS and AP2A2. Part of a complex at least composed of EPS15, HGS, and either STAM or STAM2. Binds AP2A2. Interacts with AP2B1; clathrin competes with EPS15. Binds STON2. Interacts (via its SH3-binding sites) with CRK. Interacts with SH3BP4/TTP. Interacts with ERBB2. Interacts (via UIM repeats) with CORO7 (when ubiquitinated at 'Lys-472') (By similarity). Interacts with FCHO1 (By similarity). Interacts with FCHO2. Interacts with SGIP1. Interacts (via EH domains) with DAB2. Interacts (via UIM domains) with UBQLN1 (via ubiquitin-like domain) and can interact with both the ubiquitinated and the non-ubiquitinated forms of UBQLN1. Interacts with UBQLN2 (By similarity). Interacts with REPS2; the interaction is direct (PubMed:10393179). Interacts with EPN1; the interaction is direct (By similarity).</text>
</comment>
<comment type="interaction">
    <interactant intactId="EBI-443923">
        <id>P42567</id>
    </interactant>
    <interactant intactId="EBI-1391846">
        <id>P98078</id>
        <label>Dab2</label>
    </interactant>
    <organismsDiffer>false</organismsDiffer>
    <experiments>2</experiments>
</comment>
<comment type="interaction">
    <interactant intactId="EBI-443923">
        <id>P42567</id>
    </interactant>
    <interactant intactId="EBI-443923">
        <id>P42567</id>
        <label>Eps15</label>
    </interactant>
    <organismsDiffer>false</organismsDiffer>
    <experiments>4</experiments>
</comment>
<comment type="interaction">
    <interactant intactId="EBI-443923">
        <id>P42567</id>
    </interactant>
    <interactant intactId="EBI-443931">
        <id>Q60902</id>
        <label>Eps15l1</label>
    </interactant>
    <organismsDiffer>false</organismsDiffer>
    <experiments>2</experiments>
</comment>
<comment type="interaction">
    <interactant intactId="EBI-443923">
        <id>P42567</id>
    </interactant>
    <interactant intactId="EBI-7067016">
        <id>Q8NFH8</id>
        <label>REPS2</label>
    </interactant>
    <organismsDiffer>true</organismsDiffer>
    <experiments>10</experiments>
</comment>
<comment type="subcellular location">
    <subcellularLocation>
        <location>Cytoplasm</location>
    </subcellularLocation>
    <subcellularLocation>
        <location>Cell membrane</location>
        <topology>Peripheral membrane protein</topology>
        <orientation>Cytoplasmic side</orientation>
    </subcellularLocation>
    <subcellularLocation>
        <location>Membrane</location>
        <location>Clathrin-coated pit</location>
    </subcellularLocation>
    <text evidence="2">Recruited to the plasma membrane upon EGFR activation and localizes to coated pits. Colocalizes with UBQLN1 in ubiquitin-rich cytoplasmic aggregates that are not endocytic compartments and in cytoplasmic juxtanuclear structures called aggresomes.</text>
</comment>
<comment type="subcellular location">
    <molecule>Isoform 2</molecule>
    <subcellularLocation>
        <location evidence="1">Early endosome membrane</location>
        <topology evidence="1">Peripheral membrane protein</topology>
        <orientation evidence="1">Cytoplasmic side</orientation>
    </subcellularLocation>
    <text evidence="1">Colocalizes with HGS on bilayered clathrin coats on endosomes.</text>
</comment>
<comment type="alternative products">
    <event type="alternative splicing"/>
    <isoform>
        <id>P42567-1</id>
        <name>1</name>
        <sequence type="displayed"/>
    </isoform>
    <isoform>
        <id>P42567-2</id>
        <name>2</name>
        <name>Eps15b</name>
        <sequence type="described" ref="VSP_036170 VSP_036171"/>
    </isoform>
</comment>
<comment type="domain">
    <text evidence="1">The EH domain interacts with Asn-Pro-Phe (NPF) motifs of target proteins.</text>
</comment>
<comment type="domain">
    <text evidence="1">The UIM (ubiquitin-interacting motif) repeats specifically bind 'Lys-33'-linked ubiquitin.</text>
</comment>
<comment type="PTM">
    <text evidence="1 8">Phosphorylated on serine upon DNA damage, probably by ATM or ATR (By similarity). Phosphorylation on Tyr-850 is involved in the internalization of EGFR. Not required for membrane translocation after EGF treatment or for targeting to coated pits, but essential for a subsequent step in EGFR endocytosis.</text>
</comment>
<comment type="PTM">
    <text evidence="10">Ubiquitinated.</text>
</comment>
<keyword id="KW-0002">3D-structure</keyword>
<keyword id="KW-0007">Acetylation</keyword>
<keyword id="KW-0025">Alternative splicing</keyword>
<keyword id="KW-0106">Calcium</keyword>
<keyword id="KW-1003">Cell membrane</keyword>
<keyword id="KW-0168">Coated pit</keyword>
<keyword id="KW-0963">Cytoplasm</keyword>
<keyword id="KW-0903">Direct protein sequencing</keyword>
<keyword id="KW-0254">Endocytosis</keyword>
<keyword id="KW-0967">Endosome</keyword>
<keyword id="KW-0472">Membrane</keyword>
<keyword id="KW-0479">Metal-binding</keyword>
<keyword id="KW-0597">Phosphoprotein</keyword>
<keyword id="KW-0653">Protein transport</keyword>
<keyword id="KW-1185">Reference proteome</keyword>
<keyword id="KW-0677">Repeat</keyword>
<keyword id="KW-0729">SH3-binding</keyword>
<keyword id="KW-0813">Transport</keyword>
<keyword id="KW-0832">Ubl conjugation</keyword>
<organism>
    <name type="scientific">Mus musculus</name>
    <name type="common">Mouse</name>
    <dbReference type="NCBI Taxonomy" id="10090"/>
    <lineage>
        <taxon>Eukaryota</taxon>
        <taxon>Metazoa</taxon>
        <taxon>Chordata</taxon>
        <taxon>Craniata</taxon>
        <taxon>Vertebrata</taxon>
        <taxon>Euteleostomi</taxon>
        <taxon>Mammalia</taxon>
        <taxon>Eutheria</taxon>
        <taxon>Euarchontoglires</taxon>
        <taxon>Glires</taxon>
        <taxon>Rodentia</taxon>
        <taxon>Myomorpha</taxon>
        <taxon>Muroidea</taxon>
        <taxon>Muridae</taxon>
        <taxon>Murinae</taxon>
        <taxon>Mus</taxon>
        <taxon>Mus</taxon>
    </lineage>
</organism>
<evidence type="ECO:0000250" key="1"/>
<evidence type="ECO:0000250" key="2">
    <source>
        <dbReference type="UniProtKB" id="P42566"/>
    </source>
</evidence>
<evidence type="ECO:0000255" key="3">
    <source>
        <dbReference type="PROSITE-ProRule" id="PRU00077"/>
    </source>
</evidence>
<evidence type="ECO:0000255" key="4">
    <source>
        <dbReference type="PROSITE-ProRule" id="PRU00213"/>
    </source>
</evidence>
<evidence type="ECO:0000255" key="5">
    <source>
        <dbReference type="PROSITE-ProRule" id="PRU00448"/>
    </source>
</evidence>
<evidence type="ECO:0000256" key="6">
    <source>
        <dbReference type="SAM" id="MobiDB-lite"/>
    </source>
</evidence>
<evidence type="ECO:0000269" key="7">
    <source>
    </source>
</evidence>
<evidence type="ECO:0000269" key="8">
    <source>
    </source>
</evidence>
<evidence type="ECO:0000269" key="9">
    <source>
    </source>
</evidence>
<evidence type="ECO:0000269" key="10">
    <source>
    </source>
</evidence>
<evidence type="ECO:0000269" key="11">
    <source>
    </source>
</evidence>
<evidence type="ECO:0000269" key="12">
    <source>
    </source>
</evidence>
<evidence type="ECO:0000269" key="13">
    <source>
    </source>
</evidence>
<evidence type="ECO:0000269" key="14">
    <source>
    </source>
</evidence>
<evidence type="ECO:0000303" key="15">
    <source>
    </source>
</evidence>
<evidence type="ECO:0007744" key="16">
    <source>
    </source>
</evidence>
<evidence type="ECO:0007744" key="17">
    <source>
    </source>
</evidence>
<evidence type="ECO:0007744" key="18">
    <source>
    </source>
</evidence>
<evidence type="ECO:0007829" key="19">
    <source>
        <dbReference type="PDB" id="1QJT"/>
    </source>
</evidence>
<proteinExistence type="evidence at protein level"/>
<accession>P42567</accession>
<accession>Q8C431</accession>
<reference key="1">
    <citation type="journal article" date="1993" name="Mol. Cell. Biol.">
        <title>eps15, a novel tyrosine kinase substrate, exhibits transforming activity.</title>
        <authorList>
            <person name="Fazioli F."/>
            <person name="Minichiello L."/>
            <person name="Matoskova B."/>
            <person name="Wong W.T."/>
            <person name="di Fiore P.P."/>
        </authorList>
    </citation>
    <scope>NUCLEOTIDE SEQUENCE [MRNA] (ISOFORM 1)</scope>
    <source>
        <tissue>Fibroblast</tissue>
    </source>
</reference>
<reference key="2">
    <citation type="journal article" date="2005" name="Science">
        <title>The transcriptional landscape of the mammalian genome.</title>
        <authorList>
            <person name="Carninci P."/>
            <person name="Kasukawa T."/>
            <person name="Katayama S."/>
            <person name="Gough J."/>
            <person name="Frith M.C."/>
            <person name="Maeda N."/>
            <person name="Oyama R."/>
            <person name="Ravasi T."/>
            <person name="Lenhard B."/>
            <person name="Wells C."/>
            <person name="Kodzius R."/>
            <person name="Shimokawa K."/>
            <person name="Bajic V.B."/>
            <person name="Brenner S.E."/>
            <person name="Batalov S."/>
            <person name="Forrest A.R."/>
            <person name="Zavolan M."/>
            <person name="Davis M.J."/>
            <person name="Wilming L.G."/>
            <person name="Aidinis V."/>
            <person name="Allen J.E."/>
            <person name="Ambesi-Impiombato A."/>
            <person name="Apweiler R."/>
            <person name="Aturaliya R.N."/>
            <person name="Bailey T.L."/>
            <person name="Bansal M."/>
            <person name="Baxter L."/>
            <person name="Beisel K.W."/>
            <person name="Bersano T."/>
            <person name="Bono H."/>
            <person name="Chalk A.M."/>
            <person name="Chiu K.P."/>
            <person name="Choudhary V."/>
            <person name="Christoffels A."/>
            <person name="Clutterbuck D.R."/>
            <person name="Crowe M.L."/>
            <person name="Dalla E."/>
            <person name="Dalrymple B.P."/>
            <person name="de Bono B."/>
            <person name="Della Gatta G."/>
            <person name="di Bernardo D."/>
            <person name="Down T."/>
            <person name="Engstrom P."/>
            <person name="Fagiolini M."/>
            <person name="Faulkner G."/>
            <person name="Fletcher C.F."/>
            <person name="Fukushima T."/>
            <person name="Furuno M."/>
            <person name="Futaki S."/>
            <person name="Gariboldi M."/>
            <person name="Georgii-Hemming P."/>
            <person name="Gingeras T.R."/>
            <person name="Gojobori T."/>
            <person name="Green R.E."/>
            <person name="Gustincich S."/>
            <person name="Harbers M."/>
            <person name="Hayashi Y."/>
            <person name="Hensch T.K."/>
            <person name="Hirokawa N."/>
            <person name="Hill D."/>
            <person name="Huminiecki L."/>
            <person name="Iacono M."/>
            <person name="Ikeo K."/>
            <person name="Iwama A."/>
            <person name="Ishikawa T."/>
            <person name="Jakt M."/>
            <person name="Kanapin A."/>
            <person name="Katoh M."/>
            <person name="Kawasawa Y."/>
            <person name="Kelso J."/>
            <person name="Kitamura H."/>
            <person name="Kitano H."/>
            <person name="Kollias G."/>
            <person name="Krishnan S.P."/>
            <person name="Kruger A."/>
            <person name="Kummerfeld S.K."/>
            <person name="Kurochkin I.V."/>
            <person name="Lareau L.F."/>
            <person name="Lazarevic D."/>
            <person name="Lipovich L."/>
            <person name="Liu J."/>
            <person name="Liuni S."/>
            <person name="McWilliam S."/>
            <person name="Madan Babu M."/>
            <person name="Madera M."/>
            <person name="Marchionni L."/>
            <person name="Matsuda H."/>
            <person name="Matsuzawa S."/>
            <person name="Miki H."/>
            <person name="Mignone F."/>
            <person name="Miyake S."/>
            <person name="Morris K."/>
            <person name="Mottagui-Tabar S."/>
            <person name="Mulder N."/>
            <person name="Nakano N."/>
            <person name="Nakauchi H."/>
            <person name="Ng P."/>
            <person name="Nilsson R."/>
            <person name="Nishiguchi S."/>
            <person name="Nishikawa S."/>
            <person name="Nori F."/>
            <person name="Ohara O."/>
            <person name="Okazaki Y."/>
            <person name="Orlando V."/>
            <person name="Pang K.C."/>
            <person name="Pavan W.J."/>
            <person name="Pavesi G."/>
            <person name="Pesole G."/>
            <person name="Petrovsky N."/>
            <person name="Piazza S."/>
            <person name="Reed J."/>
            <person name="Reid J.F."/>
            <person name="Ring B.Z."/>
            <person name="Ringwald M."/>
            <person name="Rost B."/>
            <person name="Ruan Y."/>
            <person name="Salzberg S.L."/>
            <person name="Sandelin A."/>
            <person name="Schneider C."/>
            <person name="Schoenbach C."/>
            <person name="Sekiguchi K."/>
            <person name="Semple C.A."/>
            <person name="Seno S."/>
            <person name="Sessa L."/>
            <person name="Sheng Y."/>
            <person name="Shibata Y."/>
            <person name="Shimada H."/>
            <person name="Shimada K."/>
            <person name="Silva D."/>
            <person name="Sinclair B."/>
            <person name="Sperling S."/>
            <person name="Stupka E."/>
            <person name="Sugiura K."/>
            <person name="Sultana R."/>
            <person name="Takenaka Y."/>
            <person name="Taki K."/>
            <person name="Tammoja K."/>
            <person name="Tan S.L."/>
            <person name="Tang S."/>
            <person name="Taylor M.S."/>
            <person name="Tegner J."/>
            <person name="Teichmann S.A."/>
            <person name="Ueda H.R."/>
            <person name="van Nimwegen E."/>
            <person name="Verardo R."/>
            <person name="Wei C.L."/>
            <person name="Yagi K."/>
            <person name="Yamanishi H."/>
            <person name="Zabarovsky E."/>
            <person name="Zhu S."/>
            <person name="Zimmer A."/>
            <person name="Hide W."/>
            <person name="Bult C."/>
            <person name="Grimmond S.M."/>
            <person name="Teasdale R.D."/>
            <person name="Liu E.T."/>
            <person name="Brusic V."/>
            <person name="Quackenbush J."/>
            <person name="Wahlestedt C."/>
            <person name="Mattick J.S."/>
            <person name="Hume D.A."/>
            <person name="Kai C."/>
            <person name="Sasaki D."/>
            <person name="Tomaru Y."/>
            <person name="Fukuda S."/>
            <person name="Kanamori-Katayama M."/>
            <person name="Suzuki M."/>
            <person name="Aoki J."/>
            <person name="Arakawa T."/>
            <person name="Iida J."/>
            <person name="Imamura K."/>
            <person name="Itoh M."/>
            <person name="Kato T."/>
            <person name="Kawaji H."/>
            <person name="Kawagashira N."/>
            <person name="Kawashima T."/>
            <person name="Kojima M."/>
            <person name="Kondo S."/>
            <person name="Konno H."/>
            <person name="Nakano K."/>
            <person name="Ninomiya N."/>
            <person name="Nishio T."/>
            <person name="Okada M."/>
            <person name="Plessy C."/>
            <person name="Shibata K."/>
            <person name="Shiraki T."/>
            <person name="Suzuki S."/>
            <person name="Tagami M."/>
            <person name="Waki K."/>
            <person name="Watahiki A."/>
            <person name="Okamura-Oho Y."/>
            <person name="Suzuki H."/>
            <person name="Kawai J."/>
            <person name="Hayashizaki Y."/>
        </authorList>
    </citation>
    <scope>NUCLEOTIDE SEQUENCE [LARGE SCALE MRNA] (ISOFORM 2)</scope>
    <source>
        <strain>C57BL/6J</strain>
        <tissue>Hippocampus</tissue>
    </source>
</reference>
<reference key="3">
    <citation type="journal article" date="2009" name="PLoS Biol.">
        <title>Lineage-specific biology revealed by a finished genome assembly of the mouse.</title>
        <authorList>
            <person name="Church D.M."/>
            <person name="Goodstadt L."/>
            <person name="Hillier L.W."/>
            <person name="Zody M.C."/>
            <person name="Goldstein S."/>
            <person name="She X."/>
            <person name="Bult C.J."/>
            <person name="Agarwala R."/>
            <person name="Cherry J.L."/>
            <person name="DiCuccio M."/>
            <person name="Hlavina W."/>
            <person name="Kapustin Y."/>
            <person name="Meric P."/>
            <person name="Maglott D."/>
            <person name="Birtle Z."/>
            <person name="Marques A.C."/>
            <person name="Graves T."/>
            <person name="Zhou S."/>
            <person name="Teague B."/>
            <person name="Potamousis K."/>
            <person name="Churas C."/>
            <person name="Place M."/>
            <person name="Herschleb J."/>
            <person name="Runnheim R."/>
            <person name="Forrest D."/>
            <person name="Amos-Landgraf J."/>
            <person name="Schwartz D.C."/>
            <person name="Cheng Z."/>
            <person name="Lindblad-Toh K."/>
            <person name="Eichler E.E."/>
            <person name="Ponting C.P."/>
        </authorList>
    </citation>
    <scope>NUCLEOTIDE SEQUENCE [LARGE SCALE GENOMIC DNA]</scope>
    <source>
        <strain>C57BL/6J</strain>
    </source>
</reference>
<reference key="4">
    <citation type="submission" date="2009-01" db="UniProtKB">
        <authorList>
            <person name="Lubec G."/>
            <person name="Sunyer B."/>
            <person name="Chen W.-Q."/>
        </authorList>
    </citation>
    <scope>PROTEIN SEQUENCE OF 838-862</scope>
    <scope>IDENTIFICATION BY MASS SPECTROMETRY</scope>
    <source>
        <strain>OF1</strain>
        <tissue>Hippocampus</tissue>
    </source>
</reference>
<reference key="5">
    <citation type="journal article" date="1999" name="EMBO J.">
        <title>Small G protein Ral and its downstream molecules regulate endocytosis of EGF and insulin receptors.</title>
        <authorList>
            <person name="Nakashima S."/>
            <person name="Morinaka K."/>
            <person name="Koyama S."/>
            <person name="Ikeda M."/>
            <person name="Kishida M."/>
            <person name="Okawa K."/>
            <person name="Iwamatsu A."/>
            <person name="Kishida S."/>
            <person name="Kikuchi A."/>
        </authorList>
    </citation>
    <scope>INTERACTION WITH REPS2</scope>
</reference>
<reference key="6">
    <citation type="journal article" date="2000" name="J. Cell Biol.">
        <title>Tyrosine phosphorylation of Eps15 is required for ligand-regulated, but not constitutive, endocytosis.</title>
        <authorList>
            <person name="Confalonieri S."/>
            <person name="Salcini A.E."/>
            <person name="Puri C."/>
            <person name="Tacchetti C."/>
            <person name="Di Fiore P.P."/>
        </authorList>
    </citation>
    <scope>PHOSPHORYLATION AT TYR-850 BY EGFR</scope>
    <scope>MUTAGENESIS OF TYR-850</scope>
</reference>
<reference key="7">
    <citation type="journal article" date="2005" name="J. Cell Sci.">
        <title>Ubiquilin recruits Eps15 into ubiquitin-rich cytoplasmic aggregates via a UIM-UBL interaction.</title>
        <authorList>
            <person name="Regan-Klapisz E."/>
            <person name="Sorokina I."/>
            <person name="Voortman J."/>
            <person name="de Keizer P."/>
            <person name="Roovers R.C."/>
            <person name="Verheesen P."/>
            <person name="Urbe S."/>
            <person name="Fallon L."/>
            <person name="Fon E.A."/>
            <person name="Verkleij A."/>
            <person name="Benmerah A."/>
            <person name="van Bergen en Henegouwen P.M."/>
        </authorList>
    </citation>
    <scope>INTERACTION WITH UBQLN1</scope>
    <scope>UBIQUITINATION</scope>
    <scope>MUTAGENESIS OF GLU-863; SER-864; GLU-865; LEU-883 AND LEU-885</scope>
</reference>
<reference key="8">
    <citation type="journal article" date="2007" name="J. Biol. Chem.">
        <title>SGIP1alpha is an endocytic protein that directly interacts with phospholipids and Eps15.</title>
        <authorList>
            <person name="Uezu A."/>
            <person name="Horiuchi A."/>
            <person name="Kanda K."/>
            <person name="Kikuchi N."/>
            <person name="Umeda K."/>
            <person name="Tsujita K."/>
            <person name="Suetsugu S."/>
            <person name="Araki N."/>
            <person name="Yamamoto H."/>
            <person name="Takenawa T."/>
            <person name="Nakanishi H."/>
        </authorList>
    </citation>
    <scope>INTERACTION WITH SGIP1</scope>
</reference>
<reference key="9">
    <citation type="journal article" date="2007" name="Proc. Natl. Acad. Sci. U.S.A.">
        <title>Large-scale phosphorylation analysis of mouse liver.</title>
        <authorList>
            <person name="Villen J."/>
            <person name="Beausoleil S.A."/>
            <person name="Gerber S.A."/>
            <person name="Gygi S.P."/>
        </authorList>
    </citation>
    <scope>PHOSPHORYLATION [LARGE SCALE ANALYSIS] AT THR-779</scope>
    <scope>IDENTIFICATION BY MASS SPECTROMETRY [LARGE SCALE ANALYSIS]</scope>
    <source>
        <tissue>Liver</tissue>
    </source>
</reference>
<reference key="10">
    <citation type="journal article" date="2009" name="Immunity">
        <title>The phagosomal proteome in interferon-gamma-activated macrophages.</title>
        <authorList>
            <person name="Trost M."/>
            <person name="English L."/>
            <person name="Lemieux S."/>
            <person name="Courcelles M."/>
            <person name="Desjardins M."/>
            <person name="Thibault P."/>
        </authorList>
    </citation>
    <scope>PHOSPHORYLATION [LARGE SCALE ANALYSIS] AT SER-324</scope>
    <scope>IDENTIFICATION BY MASS SPECTROMETRY [LARGE SCALE ANALYSIS]</scope>
</reference>
<reference key="11">
    <citation type="journal article" date="2009" name="Mol. Cell. Proteomics">
        <title>Large scale localization of protein phosphorylation by use of electron capture dissociation mass spectrometry.</title>
        <authorList>
            <person name="Sweet S.M."/>
            <person name="Bailey C.M."/>
            <person name="Cunningham D.L."/>
            <person name="Heath J.K."/>
            <person name="Cooper H.J."/>
        </authorList>
    </citation>
    <scope>IDENTIFICATION BY MASS SPECTROMETRY [LARGE SCALE ANALYSIS]</scope>
    <source>
        <tissue>Embryonic fibroblast</tissue>
    </source>
</reference>
<reference key="12">
    <citation type="journal article" date="2010" name="Cell">
        <title>A tissue-specific atlas of mouse protein phosphorylation and expression.</title>
        <authorList>
            <person name="Huttlin E.L."/>
            <person name="Jedrychowski M.P."/>
            <person name="Elias J.E."/>
            <person name="Goswami T."/>
            <person name="Rad R."/>
            <person name="Beausoleil S.A."/>
            <person name="Villen J."/>
            <person name="Haas W."/>
            <person name="Sowa M.E."/>
            <person name="Gygi S.P."/>
        </authorList>
    </citation>
    <scope>PHOSPHORYLATION [LARGE SCALE ANALYSIS] AT SER-140; THR-321; SER-324; SER-561; SER-562; THR-781 AND SER-816</scope>
    <scope>IDENTIFICATION BY MASS SPECTROMETRY [LARGE SCALE ANALYSIS]</scope>
    <source>
        <tissue>Brain</tissue>
        <tissue>Brown adipose tissue</tissue>
        <tissue>Heart</tissue>
        <tissue>Kidney</tissue>
        <tissue>Liver</tissue>
        <tissue>Lung</tissue>
        <tissue>Pancreas</tissue>
        <tissue>Spleen</tissue>
        <tissue>Testis</tissue>
    </source>
</reference>
<reference key="13">
    <citation type="journal article" date="2010" name="Science">
        <title>FCHo proteins are nucleators of clathrin-mediated endocytosis.</title>
        <authorList>
            <person name="Henne W.M."/>
            <person name="Boucrot E."/>
            <person name="Meinecke M."/>
            <person name="Evergren E."/>
            <person name="Vallis Y."/>
            <person name="Mittal R."/>
            <person name="McMahon H.T."/>
        </authorList>
    </citation>
    <scope>INTERACTION WITH FCHO2</scope>
</reference>
<reference key="14">
    <citation type="journal article" date="2011" name="Genes Cells">
        <title>Characterization of the EFC/F-BAR domain protein, FCHO2.</title>
        <authorList>
            <person name="Uezu A."/>
            <person name="Umeda K."/>
            <person name="Tsujita K."/>
            <person name="Suetsugu S."/>
            <person name="Takenawa T."/>
            <person name="Nakanishi H."/>
        </authorList>
    </citation>
    <scope>INTERACTION WITH FCHO2</scope>
</reference>
<reference key="15">
    <citation type="journal article" date="2012" name="Mol. Biol. Cell">
        <title>The clathrin adaptor Dab2 recruits EH domain scaffold proteins to regulate integrin beta1 endocytosis.</title>
        <authorList>
            <person name="Teckchandani A."/>
            <person name="Mulkearns E.E."/>
            <person name="Randolph T.W."/>
            <person name="Toida N."/>
            <person name="Cooper J.A."/>
        </authorList>
    </citation>
    <scope>INTERACTION WITH DAB2</scope>
</reference>
<reference key="16">
    <citation type="journal article" date="1999" name="Biochemistry">
        <title>The EH1 domain of Eps15 is structurally classified as a member of the S100 subclass of EF-hand-containing proteins.</title>
        <authorList>
            <person name="Whitehead B."/>
            <person name="Tessari M."/>
            <person name="Carotenuto A."/>
            <person name="van Bergen en Henegouwen P.M."/>
            <person name="Vuister G.W."/>
        </authorList>
    </citation>
    <scope>STRUCTURE BY NMR OF 7-105</scope>
</reference>
<reference key="17">
    <citation type="journal article" date="2002" name="Structure">
        <title>Accessory protein recruitment motifs in clathrin-mediated endocytosis.</title>
        <authorList>
            <person name="Brett T.J."/>
            <person name="Traub L.M."/>
            <person name="Fremont D.H."/>
        </authorList>
    </citation>
    <scope>X-RAY CRYSTALLOGRAPHY (1.22 ANGSTROMS) OF 628-632 IN COMPLEX WITH AP2A2</scope>
</reference>
<gene>
    <name type="primary">Eps15</name>
</gene>
<sequence length="897" mass="98471">MAAAAQLSLTQLSSGNPVYEKYYRQVEAGNTGRVLALDAAAFLKKSGLPDLILGKIWDLADTDGKGVLSKQEFFVALRLVACAQNGLEVSLSSLSLAVPPPRFHDSSSPLLTSGPSVAELPWAVKSEDKAKYDAIFDSLSPVDGFLSGDKVKPVLLNSKLPVEILGRVWELSDIDHDGKLDRDEFAVAMFLVYCALEKEPVPMSLPPALVPPSKRKTWVVSPAEKAKYDEIFLKTDKDMDGYVSGLEVRETFLKTGLPSALLAHIWSLCDTKGCGKLSKDQFALAFHLINQKLIKGIDPPHSLTPEMIPPSDRSSLQKNITGSSPVADFSAIKELDTLNNEIVDLQREKNNVEQDLKEKEDTVKQRTSEVQDLQDEVQRESINLQKLQAQKQQVQELLGELDEQKAQLEEQLQEVRKKCAEEAQLISSLKAEITSQESQISSYEEELLKAREELSRLQQETAQLEESVESGKAQLEPLQQHLQESQQEISSMQMRLEMKDLETDNNQSNWSSSPQSVLVNGATDYCSLSTSSSETANFNEHAEGQNNLESEPTHQESSVRSSPEIAPSDVTDESEAVTVAGNEKVTPRFDDDKHSKEEDPFNVESSSLTDAVADTNLDFFQSDPFVGSDPFKDDPFGKIDPFGGDPFKGSDPFASDCFFKQTSTDPFTTSSTDPFSASSNSSNTSVETWKHNDPFAPGGTVVAAASDSATDPFASVFGNESFGDGFADFSTLSKVNNEDAFNPTISSSTSSVTIAKPMLEETASKSEDVPPALPPKVGTPTRPCPPPPGKRPINKLDSSDPLKLNDPFQPFPGNDSPKEKDPDMFCDPFTSSTTTNKEADPSNFANFSAYPSEEDMIEWAKRESEREEEQRLARLNQQEQEDLELAIALSKSEISEA</sequence>
<feature type="initiator methionine" description="Removed" evidence="2">
    <location>
        <position position="1"/>
    </location>
</feature>
<feature type="chain" id="PRO_0000146117" description="Epidermal growth factor receptor substrate 15">
    <location>
        <begin position="2"/>
        <end position="897"/>
    </location>
</feature>
<feature type="domain" description="EH 1" evidence="3">
    <location>
        <begin position="15"/>
        <end position="104"/>
    </location>
</feature>
<feature type="domain" description="EF-hand 1" evidence="5">
    <location>
        <begin position="48"/>
        <end position="83"/>
    </location>
</feature>
<feature type="domain" description="EH 2" evidence="3">
    <location>
        <begin position="128"/>
        <end position="216"/>
    </location>
</feature>
<feature type="domain" description="EF-hand 2" evidence="5">
    <location>
        <begin position="160"/>
        <end position="195"/>
    </location>
</feature>
<feature type="domain" description="EF-hand 3" evidence="5">
    <location>
        <begin position="223"/>
        <end position="258"/>
    </location>
</feature>
<feature type="domain" description="EH 3" evidence="3">
    <location>
        <begin position="224"/>
        <end position="314"/>
    </location>
</feature>
<feature type="domain" description="EF-hand 4" evidence="5">
    <location>
        <begin position="262"/>
        <end position="292"/>
    </location>
</feature>
<feature type="repeat" description="1">
    <location>
        <begin position="599"/>
        <end position="601"/>
    </location>
</feature>
<feature type="repeat" description="2">
    <location>
        <begin position="623"/>
        <end position="625"/>
    </location>
</feature>
<feature type="repeat" description="3">
    <location>
        <begin position="629"/>
        <end position="631"/>
    </location>
</feature>
<feature type="repeat" description="4">
    <location>
        <begin position="634"/>
        <end position="636"/>
    </location>
</feature>
<feature type="repeat" description="5">
    <location>
        <begin position="640"/>
        <end position="642"/>
    </location>
</feature>
<feature type="repeat" description="6">
    <location>
        <begin position="645"/>
        <end position="647"/>
    </location>
</feature>
<feature type="repeat" description="7">
    <location>
        <begin position="651"/>
        <end position="653"/>
    </location>
</feature>
<feature type="repeat" description="8">
    <location>
        <begin position="665"/>
        <end position="667"/>
    </location>
</feature>
<feature type="repeat" description="9">
    <location>
        <begin position="673"/>
        <end position="675"/>
    </location>
</feature>
<feature type="repeat" description="10">
    <location>
        <begin position="693"/>
        <end position="695"/>
    </location>
</feature>
<feature type="repeat" description="11">
    <location>
        <begin position="711"/>
        <end position="713"/>
    </location>
</feature>
<feature type="repeat" description="12">
    <location>
        <begin position="806"/>
        <end position="808"/>
    </location>
</feature>
<feature type="repeat" description="13">
    <location>
        <begin position="827"/>
        <end position="829"/>
    </location>
</feature>
<feature type="domain" description="UIM 1" evidence="4">
    <location>
        <begin position="852"/>
        <end position="871"/>
    </location>
</feature>
<feature type="domain" description="UIM 2" evidence="4">
    <location>
        <begin position="878"/>
        <end position="897"/>
    </location>
</feature>
<feature type="region of interest" description="Interaction with DAB2" evidence="14">
    <location>
        <begin position="2"/>
        <end position="330"/>
    </location>
</feature>
<feature type="region of interest" description="Disordered" evidence="6">
    <location>
        <begin position="528"/>
        <end position="607"/>
    </location>
</feature>
<feature type="region of interest" description="13 X 3 AA repeats of D-P-F">
    <location>
        <begin position="599"/>
        <end position="829"/>
    </location>
</feature>
<feature type="region of interest" description="Disordered" evidence="6">
    <location>
        <begin position="667"/>
        <end position="692"/>
    </location>
</feature>
<feature type="region of interest" description="Disordered" evidence="6">
    <location>
        <begin position="741"/>
        <end position="849"/>
    </location>
</feature>
<feature type="compositionally biased region" description="Polar residues" evidence="6">
    <location>
        <begin position="528"/>
        <end position="561"/>
    </location>
</feature>
<feature type="compositionally biased region" description="Basic and acidic residues" evidence="6">
    <location>
        <begin position="585"/>
        <end position="599"/>
    </location>
</feature>
<feature type="compositionally biased region" description="Low complexity" evidence="6">
    <location>
        <begin position="667"/>
        <end position="685"/>
    </location>
</feature>
<feature type="compositionally biased region" description="Low complexity" evidence="6">
    <location>
        <begin position="744"/>
        <end position="754"/>
    </location>
</feature>
<feature type="compositionally biased region" description="Basic and acidic residues" evidence="6">
    <location>
        <begin position="758"/>
        <end position="768"/>
    </location>
</feature>
<feature type="binding site" evidence="5">
    <location>
        <position position="173"/>
    </location>
    <ligand>
        <name>Ca(2+)</name>
        <dbReference type="ChEBI" id="CHEBI:29108"/>
        <label>1</label>
    </ligand>
</feature>
<feature type="binding site" evidence="5">
    <location>
        <position position="175"/>
    </location>
    <ligand>
        <name>Ca(2+)</name>
        <dbReference type="ChEBI" id="CHEBI:29108"/>
        <label>1</label>
    </ligand>
</feature>
<feature type="binding site" evidence="5">
    <location>
        <position position="177"/>
    </location>
    <ligand>
        <name>Ca(2+)</name>
        <dbReference type="ChEBI" id="CHEBI:29108"/>
        <label>1</label>
    </ligand>
</feature>
<feature type="binding site" evidence="5">
    <location>
        <position position="179"/>
    </location>
    <ligand>
        <name>Ca(2+)</name>
        <dbReference type="ChEBI" id="CHEBI:29108"/>
        <label>1</label>
    </ligand>
</feature>
<feature type="binding site" evidence="5">
    <location>
        <position position="184"/>
    </location>
    <ligand>
        <name>Ca(2+)</name>
        <dbReference type="ChEBI" id="CHEBI:29108"/>
        <label>1</label>
    </ligand>
</feature>
<feature type="binding site" evidence="5">
    <location>
        <position position="236"/>
    </location>
    <ligand>
        <name>Ca(2+)</name>
        <dbReference type="ChEBI" id="CHEBI:29108"/>
        <label>2</label>
    </ligand>
</feature>
<feature type="binding site" evidence="5">
    <location>
        <position position="238"/>
    </location>
    <ligand>
        <name>Ca(2+)</name>
        <dbReference type="ChEBI" id="CHEBI:29108"/>
        <label>2</label>
    </ligand>
</feature>
<feature type="binding site" evidence="5">
    <location>
        <position position="240"/>
    </location>
    <ligand>
        <name>Ca(2+)</name>
        <dbReference type="ChEBI" id="CHEBI:29108"/>
        <label>2</label>
    </ligand>
</feature>
<feature type="binding site" evidence="5">
    <location>
        <position position="242"/>
    </location>
    <ligand>
        <name>Ca(2+)</name>
        <dbReference type="ChEBI" id="CHEBI:29108"/>
        <label>2</label>
    </ligand>
</feature>
<feature type="binding site" evidence="5">
    <location>
        <position position="247"/>
    </location>
    <ligand>
        <name>Ca(2+)</name>
        <dbReference type="ChEBI" id="CHEBI:29108"/>
        <label>2</label>
    </ligand>
</feature>
<feature type="modified residue" description="N-acetylalanine" evidence="2">
    <location>
        <position position="2"/>
    </location>
</feature>
<feature type="modified residue" description="Phosphoserine" evidence="2">
    <location>
        <position position="108"/>
    </location>
</feature>
<feature type="modified residue" description="Phosphoserine" evidence="18">
    <location>
        <position position="140"/>
    </location>
</feature>
<feature type="modified residue" description="Phosphothreonine" evidence="18">
    <location>
        <position position="321"/>
    </location>
</feature>
<feature type="modified residue" description="Phosphoserine" evidence="2">
    <location>
        <position position="323"/>
    </location>
</feature>
<feature type="modified residue" description="Phosphoserine" evidence="17 18">
    <location>
        <position position="324"/>
    </location>
</feature>
<feature type="modified residue" description="Phosphoserine" evidence="2">
    <location>
        <position position="467"/>
    </location>
</feature>
<feature type="modified residue" description="Phosphoserine" evidence="2">
    <location>
        <position position="470"/>
    </location>
</feature>
<feature type="modified residue" description="Phosphoserine" evidence="2">
    <location>
        <position position="485"/>
    </location>
</feature>
<feature type="modified residue" description="Phosphoserine" evidence="18">
    <location>
        <position position="561"/>
    </location>
</feature>
<feature type="modified residue" description="Phosphoserine" evidence="18">
    <location>
        <position position="562"/>
    </location>
</feature>
<feature type="modified residue" description="Phosphoserine" evidence="2">
    <location>
        <position position="748"/>
    </location>
</feature>
<feature type="modified residue" description="Phosphothreonine" evidence="16">
    <location>
        <position position="779"/>
    </location>
</feature>
<feature type="modified residue" description="Phosphothreonine" evidence="18">
    <location>
        <position position="781"/>
    </location>
</feature>
<feature type="modified residue" description="Phosphoserine" evidence="2">
    <location>
        <position position="798"/>
    </location>
</feature>
<feature type="modified residue" description="Phosphoserine" evidence="18">
    <location>
        <position position="816"/>
    </location>
</feature>
<feature type="modified residue" description="Phosphotyrosine; by EGFR" evidence="8">
    <location>
        <position position="850"/>
    </location>
</feature>
<feature type="splice variant" id="VSP_036170" description="In isoform 2." evidence="15">
    <location>
        <begin position="1"/>
        <end position="314"/>
    </location>
</feature>
<feature type="splice variant" id="VSP_036171" description="In isoform 2." evidence="15">
    <original>SLQKNITGSSPVADFSAIKELDTLNNEIVDLQ</original>
    <variation>MYSDSGLGGWIAIPAVADVLRYSCIVCWSS</variation>
    <location>
        <begin position="315"/>
        <end position="346"/>
    </location>
</feature>
<feature type="mutagenesis site" description="Inefficient EGFR internalization." evidence="8">
    <original>Y</original>
    <variation>F</variation>
    <location>
        <position position="850"/>
    </location>
</feature>
<feature type="mutagenesis site" description="Loss of interaction with UBQLN1; when associated with A-864 and A-865." evidence="10">
    <original>E</original>
    <variation>A</variation>
    <location>
        <position position="863"/>
    </location>
</feature>
<feature type="mutagenesis site" description="Loss of interaction with UBQLN1; when associated with A-863 and A-865." evidence="10">
    <original>S</original>
    <variation>A</variation>
    <location>
        <position position="864"/>
    </location>
</feature>
<feature type="mutagenesis site" description="Loss of interaction with UBQLN1; when associated with A-863 and A-864." evidence="10">
    <original>E</original>
    <variation>A</variation>
    <location>
        <position position="865"/>
    </location>
</feature>
<feature type="mutagenesis site" description="Loss of ubiquitination and interaction with UBQLN1; when associated with A-885." evidence="10">
    <original>L</original>
    <variation>A</variation>
    <location>
        <position position="883"/>
    </location>
</feature>
<feature type="mutagenesis site" description="Loss of ubiquitination and interaction with UBQLN1; when associated with A-883." evidence="10">
    <original>L</original>
    <variation>A</variation>
    <location>
        <position position="885"/>
    </location>
</feature>
<feature type="helix" evidence="19">
    <location>
        <begin position="9"/>
        <end position="12"/>
    </location>
</feature>
<feature type="turn" evidence="19">
    <location>
        <begin position="13"/>
        <end position="15"/>
    </location>
</feature>
<feature type="helix" evidence="19">
    <location>
        <begin position="18"/>
        <end position="26"/>
    </location>
</feature>
<feature type="helix" evidence="19">
    <location>
        <begin position="37"/>
        <end position="44"/>
    </location>
</feature>
<feature type="strand" evidence="19">
    <location>
        <begin position="46"/>
        <end position="48"/>
    </location>
</feature>
<feature type="helix" evidence="19">
    <location>
        <begin position="50"/>
        <end position="60"/>
    </location>
</feature>
<feature type="strand" evidence="19">
    <location>
        <begin position="63"/>
        <end position="67"/>
    </location>
</feature>
<feature type="helix" evidence="19">
    <location>
        <begin position="71"/>
        <end position="83"/>
    </location>
</feature>
<feature type="turn" evidence="19">
    <location>
        <begin position="84"/>
        <end position="86"/>
    </location>
</feature>
<feature type="helix" evidence="19">
    <location>
        <begin position="91"/>
        <end position="93"/>
    </location>
</feature>
<name>EPS15_MOUSE</name>
<dbReference type="EMBL" id="L21768">
    <property type="protein sequence ID" value="AAA02912.1"/>
    <property type="molecule type" value="mRNA"/>
</dbReference>
<dbReference type="EMBL" id="AK083176">
    <property type="protein sequence ID" value="BAC38796.1"/>
    <property type="molecule type" value="mRNA"/>
</dbReference>
<dbReference type="EMBL" id="AL669905">
    <property type="status" value="NOT_ANNOTATED_CDS"/>
    <property type="molecule type" value="Genomic_DNA"/>
</dbReference>
<dbReference type="CCDS" id="CCDS18462.1">
    <molecule id="P42567-1"/>
</dbReference>
<dbReference type="PIR" id="A54696">
    <property type="entry name" value="A54696"/>
</dbReference>
<dbReference type="RefSeq" id="NP_001153436.1">
    <property type="nucleotide sequence ID" value="NM_001159964.1"/>
</dbReference>
<dbReference type="RefSeq" id="NP_031969.1">
    <molecule id="P42567-1"/>
    <property type="nucleotide sequence ID" value="NM_007943.3"/>
</dbReference>
<dbReference type="PDB" id="1KYF">
    <property type="method" value="X-ray"/>
    <property type="resolution" value="1.22 A"/>
    <property type="chains" value="P=627-632"/>
</dbReference>
<dbReference type="PDB" id="1KYU">
    <property type="method" value="X-ray"/>
    <property type="resolution" value="1.80 A"/>
    <property type="chains" value="P=627-632"/>
</dbReference>
<dbReference type="PDB" id="1QJT">
    <property type="method" value="NMR"/>
    <property type="chains" value="A=7-105"/>
</dbReference>
<dbReference type="PDBsum" id="1KYF"/>
<dbReference type="PDBsum" id="1KYU"/>
<dbReference type="PDBsum" id="1QJT"/>
<dbReference type="SMR" id="P42567"/>
<dbReference type="BioGRID" id="199489">
    <property type="interactions" value="51"/>
</dbReference>
<dbReference type="CORUM" id="P42567"/>
<dbReference type="DIP" id="DIP-29052N"/>
<dbReference type="ELM" id="P42567"/>
<dbReference type="FunCoup" id="P42567">
    <property type="interactions" value="2383"/>
</dbReference>
<dbReference type="IntAct" id="P42567">
    <property type="interactions" value="9"/>
</dbReference>
<dbReference type="MINT" id="P42567"/>
<dbReference type="STRING" id="10090.ENSMUSP00000099790"/>
<dbReference type="GlyGen" id="P42567">
    <property type="glycosylation" value="1 site, 1 O-linked glycan (1 site)"/>
</dbReference>
<dbReference type="iPTMnet" id="P42567"/>
<dbReference type="PhosphoSitePlus" id="P42567"/>
<dbReference type="jPOST" id="P42567"/>
<dbReference type="PaxDb" id="10090-ENSMUSP00000099790"/>
<dbReference type="PeptideAtlas" id="P42567"/>
<dbReference type="ProteomicsDB" id="275463">
    <molecule id="P42567-1"/>
</dbReference>
<dbReference type="ProteomicsDB" id="275464">
    <molecule id="P42567-2"/>
</dbReference>
<dbReference type="Antibodypedia" id="1916">
    <property type="antibodies" value="253 antibodies from 31 providers"/>
</dbReference>
<dbReference type="DNASU" id="13858"/>
<dbReference type="Ensembl" id="ENSMUST00000102729.10">
    <molecule id="P42567-1"/>
    <property type="protein sequence ID" value="ENSMUSP00000099790.4"/>
    <property type="gene ID" value="ENSMUSG00000028552.14"/>
</dbReference>
<dbReference type="GeneID" id="13858"/>
<dbReference type="KEGG" id="mmu:13858"/>
<dbReference type="UCSC" id="uc008ucf.2">
    <molecule id="P42567-1"/>
    <property type="organism name" value="mouse"/>
</dbReference>
<dbReference type="UCSC" id="uc008ucg.2">
    <molecule id="P42567-2"/>
    <property type="organism name" value="mouse"/>
</dbReference>
<dbReference type="AGR" id="MGI:104583"/>
<dbReference type="CTD" id="2060"/>
<dbReference type="MGI" id="MGI:104583">
    <property type="gene designation" value="Eps15"/>
</dbReference>
<dbReference type="VEuPathDB" id="HostDB:ENSMUSG00000028552"/>
<dbReference type="eggNOG" id="KOG0998">
    <property type="taxonomic scope" value="Eukaryota"/>
</dbReference>
<dbReference type="GeneTree" id="ENSGT00940000155751"/>
<dbReference type="InParanoid" id="P42567"/>
<dbReference type="OrthoDB" id="524326at2759"/>
<dbReference type="PhylomeDB" id="P42567"/>
<dbReference type="TreeFam" id="TF324293"/>
<dbReference type="Reactome" id="R-MMU-182971">
    <property type="pathway name" value="EGFR downregulation"/>
</dbReference>
<dbReference type="Reactome" id="R-MMU-6807004">
    <property type="pathway name" value="Negative regulation of MET activity"/>
</dbReference>
<dbReference type="Reactome" id="R-MMU-8856825">
    <property type="pathway name" value="Cargo recognition for clathrin-mediated endocytosis"/>
</dbReference>
<dbReference type="Reactome" id="R-MMU-8856828">
    <property type="pathway name" value="Clathrin-mediated endocytosis"/>
</dbReference>
<dbReference type="BioGRID-ORCS" id="13858">
    <property type="hits" value="1 hit in 79 CRISPR screens"/>
</dbReference>
<dbReference type="CD-CODE" id="CE726F99">
    <property type="entry name" value="Postsynaptic density"/>
</dbReference>
<dbReference type="ChiTaRS" id="Eps15">
    <property type="organism name" value="mouse"/>
</dbReference>
<dbReference type="EvolutionaryTrace" id="P42567"/>
<dbReference type="PRO" id="PR:P42567"/>
<dbReference type="Proteomes" id="UP000000589">
    <property type="component" value="Chromosome 4"/>
</dbReference>
<dbReference type="RNAct" id="P42567">
    <property type="molecule type" value="protein"/>
</dbReference>
<dbReference type="Bgee" id="ENSMUSG00000028552">
    <property type="expression patterns" value="Expressed in CA1 field of hippocampus and 266 other cell types or tissues"/>
</dbReference>
<dbReference type="ExpressionAtlas" id="P42567">
    <property type="expression patterns" value="baseline and differential"/>
</dbReference>
<dbReference type="GO" id="GO:0016235">
    <property type="term" value="C:aggresome"/>
    <property type="evidence" value="ECO:0007669"/>
    <property type="project" value="Ensembl"/>
</dbReference>
<dbReference type="GO" id="GO:0030122">
    <property type="term" value="C:AP-2 adaptor complex"/>
    <property type="evidence" value="ECO:0000314"/>
    <property type="project" value="UniProtKB"/>
</dbReference>
<dbReference type="GO" id="GO:0016324">
    <property type="term" value="C:apical plasma membrane"/>
    <property type="evidence" value="ECO:0007669"/>
    <property type="project" value="Ensembl"/>
</dbReference>
<dbReference type="GO" id="GO:0009925">
    <property type="term" value="C:basal plasma membrane"/>
    <property type="evidence" value="ECO:0007669"/>
    <property type="project" value="Ensembl"/>
</dbReference>
<dbReference type="GO" id="GO:0060170">
    <property type="term" value="C:ciliary membrane"/>
    <property type="evidence" value="ECO:0000314"/>
    <property type="project" value="MGI"/>
</dbReference>
<dbReference type="GO" id="GO:0030132">
    <property type="term" value="C:clathrin coat of coated pit"/>
    <property type="evidence" value="ECO:0000314"/>
    <property type="project" value="MGI"/>
</dbReference>
<dbReference type="GO" id="GO:0005905">
    <property type="term" value="C:clathrin-coated pit"/>
    <property type="evidence" value="ECO:0000314"/>
    <property type="project" value="MGI"/>
</dbReference>
<dbReference type="GO" id="GO:0030136">
    <property type="term" value="C:clathrin-coated vesicle"/>
    <property type="evidence" value="ECO:0000314"/>
    <property type="project" value="UniProtKB"/>
</dbReference>
<dbReference type="GO" id="GO:0005829">
    <property type="term" value="C:cytosol"/>
    <property type="evidence" value="ECO:0007669"/>
    <property type="project" value="Ensembl"/>
</dbReference>
<dbReference type="GO" id="GO:0031901">
    <property type="term" value="C:early endosome membrane"/>
    <property type="evidence" value="ECO:0007669"/>
    <property type="project" value="UniProtKB-SubCell"/>
</dbReference>
<dbReference type="GO" id="GO:0098978">
    <property type="term" value="C:glutamatergic synapse"/>
    <property type="evidence" value="ECO:0007669"/>
    <property type="project" value="Ensembl"/>
</dbReference>
<dbReference type="GO" id="GO:0005886">
    <property type="term" value="C:plasma membrane"/>
    <property type="evidence" value="ECO:0000314"/>
    <property type="project" value="UniProtKB"/>
</dbReference>
<dbReference type="GO" id="GO:0098843">
    <property type="term" value="C:postsynaptic endocytic zone"/>
    <property type="evidence" value="ECO:0007669"/>
    <property type="project" value="Ensembl"/>
</dbReference>
<dbReference type="GO" id="GO:0005509">
    <property type="term" value="F:calcium ion binding"/>
    <property type="evidence" value="ECO:0007669"/>
    <property type="project" value="InterPro"/>
</dbReference>
<dbReference type="GO" id="GO:0042802">
    <property type="term" value="F:identical protein binding"/>
    <property type="evidence" value="ECO:0000353"/>
    <property type="project" value="IntAct"/>
</dbReference>
<dbReference type="GO" id="GO:0031593">
    <property type="term" value="F:polyubiquitin modification-dependent protein binding"/>
    <property type="evidence" value="ECO:0000250"/>
    <property type="project" value="UniProtKB"/>
</dbReference>
<dbReference type="GO" id="GO:0017124">
    <property type="term" value="F:SH3 domain binding"/>
    <property type="evidence" value="ECO:0007669"/>
    <property type="project" value="UniProtKB-KW"/>
</dbReference>
<dbReference type="GO" id="GO:0043130">
    <property type="term" value="F:ubiquitin binding"/>
    <property type="evidence" value="ECO:0000314"/>
    <property type="project" value="MGI"/>
</dbReference>
<dbReference type="GO" id="GO:0048268">
    <property type="term" value="P:clathrin coat assembly"/>
    <property type="evidence" value="ECO:0007669"/>
    <property type="project" value="Ensembl"/>
</dbReference>
<dbReference type="GO" id="GO:0032456">
    <property type="term" value="P:endocytic recycling"/>
    <property type="evidence" value="ECO:0007669"/>
    <property type="project" value="Ensembl"/>
</dbReference>
<dbReference type="GO" id="GO:0006895">
    <property type="term" value="P:Golgi to endosome transport"/>
    <property type="evidence" value="ECO:0000250"/>
    <property type="project" value="UniProtKB"/>
</dbReference>
<dbReference type="GO" id="GO:0001921">
    <property type="term" value="P:positive regulation of receptor recycling"/>
    <property type="evidence" value="ECO:0007669"/>
    <property type="project" value="Ensembl"/>
</dbReference>
<dbReference type="GO" id="GO:0098884">
    <property type="term" value="P:postsynaptic neurotransmitter receptor internalization"/>
    <property type="evidence" value="ECO:0007669"/>
    <property type="project" value="Ensembl"/>
</dbReference>
<dbReference type="GO" id="GO:0019065">
    <property type="term" value="P:receptor-mediated endocytosis of virus by host cell"/>
    <property type="evidence" value="ECO:0007669"/>
    <property type="project" value="Ensembl"/>
</dbReference>
<dbReference type="GO" id="GO:0042127">
    <property type="term" value="P:regulation of cell population proliferation"/>
    <property type="evidence" value="ECO:0007669"/>
    <property type="project" value="Ensembl"/>
</dbReference>
<dbReference type="GO" id="GO:0032880">
    <property type="term" value="P:regulation of protein localization"/>
    <property type="evidence" value="ECO:0000315"/>
    <property type="project" value="MGI"/>
</dbReference>
<dbReference type="GO" id="GO:0070086">
    <property type="term" value="P:ubiquitin-dependent endocytosis"/>
    <property type="evidence" value="ECO:0000315"/>
    <property type="project" value="MGI"/>
</dbReference>
<dbReference type="CDD" id="cd00052">
    <property type="entry name" value="EH"/>
    <property type="match status" value="3"/>
</dbReference>
<dbReference type="FunFam" id="1.10.287.1490:FF:000003">
    <property type="entry name" value="Epidermal growth factor receptor pathway substrate 15"/>
    <property type="match status" value="1"/>
</dbReference>
<dbReference type="FunFam" id="1.10.238.10:FF:000026">
    <property type="entry name" value="Epidermal growth factor receptor pathway substrate 15-like 1"/>
    <property type="match status" value="1"/>
</dbReference>
<dbReference type="FunFam" id="1.10.238.10:FF:000074">
    <property type="entry name" value="epidermal growth factor receptor substrate 15 isoform X1"/>
    <property type="match status" value="1"/>
</dbReference>
<dbReference type="Gene3D" id="1.10.287.1490">
    <property type="match status" value="1"/>
</dbReference>
<dbReference type="Gene3D" id="1.10.238.10">
    <property type="entry name" value="EF-hand"/>
    <property type="match status" value="3"/>
</dbReference>
<dbReference type="InterPro" id="IPR011992">
    <property type="entry name" value="EF-hand-dom_pair"/>
</dbReference>
<dbReference type="InterPro" id="IPR018247">
    <property type="entry name" value="EF_Hand_1_Ca_BS"/>
</dbReference>
<dbReference type="InterPro" id="IPR002048">
    <property type="entry name" value="EF_hand_dom"/>
</dbReference>
<dbReference type="InterPro" id="IPR000261">
    <property type="entry name" value="EH_dom"/>
</dbReference>
<dbReference type="InterPro" id="IPR003903">
    <property type="entry name" value="UIM_dom"/>
</dbReference>
<dbReference type="PANTHER" id="PTHR11216">
    <property type="entry name" value="EH DOMAIN"/>
    <property type="match status" value="1"/>
</dbReference>
<dbReference type="PANTHER" id="PTHR11216:SF54">
    <property type="entry name" value="EPIDERMAL GROWTH FACTOR RECEPTOR SUBSTRATE 15"/>
    <property type="match status" value="1"/>
</dbReference>
<dbReference type="Pfam" id="PF12763">
    <property type="entry name" value="EH"/>
    <property type="match status" value="3"/>
</dbReference>
<dbReference type="SMART" id="SM00054">
    <property type="entry name" value="EFh"/>
    <property type="match status" value="4"/>
</dbReference>
<dbReference type="SMART" id="SM00027">
    <property type="entry name" value="EH"/>
    <property type="match status" value="3"/>
</dbReference>
<dbReference type="SMART" id="SM00726">
    <property type="entry name" value="UIM"/>
    <property type="match status" value="2"/>
</dbReference>
<dbReference type="SUPFAM" id="SSF47473">
    <property type="entry name" value="EF-hand"/>
    <property type="match status" value="3"/>
</dbReference>
<dbReference type="SUPFAM" id="SSF90257">
    <property type="entry name" value="Myosin rod fragments"/>
    <property type="match status" value="1"/>
</dbReference>
<dbReference type="PROSITE" id="PS00018">
    <property type="entry name" value="EF_HAND_1"/>
    <property type="match status" value="2"/>
</dbReference>
<dbReference type="PROSITE" id="PS50222">
    <property type="entry name" value="EF_HAND_2"/>
    <property type="match status" value="4"/>
</dbReference>
<dbReference type="PROSITE" id="PS50031">
    <property type="entry name" value="EH"/>
    <property type="match status" value="3"/>
</dbReference>
<dbReference type="PROSITE" id="PS50330">
    <property type="entry name" value="UIM"/>
    <property type="match status" value="2"/>
</dbReference>
<protein>
    <recommendedName>
        <fullName>Epidermal growth factor receptor substrate 15</fullName>
        <shortName>Protein Eps15</shortName>
    </recommendedName>
    <alternativeName>
        <fullName>Protein AF-1p</fullName>
    </alternativeName>
</protein>